<reference key="1">
    <citation type="journal article" date="2003" name="Nucleic Acids Res.">
        <title>The complete genome sequence and analysis of Corynebacterium diphtheriae NCTC13129.</title>
        <authorList>
            <person name="Cerdeno-Tarraga A.-M."/>
            <person name="Efstratiou A."/>
            <person name="Dover L.G."/>
            <person name="Holden M.T.G."/>
            <person name="Pallen M.J."/>
            <person name="Bentley S.D."/>
            <person name="Besra G.S."/>
            <person name="Churcher C.M."/>
            <person name="James K.D."/>
            <person name="De Zoysa A."/>
            <person name="Chillingworth T."/>
            <person name="Cronin A."/>
            <person name="Dowd L."/>
            <person name="Feltwell T."/>
            <person name="Hamlin N."/>
            <person name="Holroyd S."/>
            <person name="Jagels K."/>
            <person name="Moule S."/>
            <person name="Quail M.A."/>
            <person name="Rabbinowitsch E."/>
            <person name="Rutherford K.M."/>
            <person name="Thomson N.R."/>
            <person name="Unwin L."/>
            <person name="Whitehead S."/>
            <person name="Barrell B.G."/>
            <person name="Parkhill J."/>
        </authorList>
    </citation>
    <scope>NUCLEOTIDE SEQUENCE [LARGE SCALE GENOMIC DNA]</scope>
    <source>
        <strain>ATCC 700971 / NCTC 13129 / Biotype gravis</strain>
    </source>
</reference>
<accession>Q6NFU5</accession>
<sequence>MNNNGMQMPQARYVLPSFIEQSAYGTKETNPYAKLFEERIIFLGTQVDDTSANDIMAQLLVLEGLDPDRDITMYINSPGGSFTSLMAIYDTMQYVRPDVRTVCLGQAASAAAVLLAAGAPGKRACLPNSRVLIHQPATQGTQGQVSDLEIQAKEIERMRTLMEQTLARHTGRSAEQVRIDTDRDKILTAEEAVEYGIVDQVFDYRKLNG</sequence>
<feature type="chain" id="PRO_0000179541" description="ATP-dependent Clp protease proteolytic subunit 1">
    <location>
        <begin position="1"/>
        <end position="209"/>
    </location>
</feature>
<feature type="active site" description="Nucleophile" evidence="1">
    <location>
        <position position="109"/>
    </location>
</feature>
<feature type="active site" evidence="1">
    <location>
        <position position="134"/>
    </location>
</feature>
<gene>
    <name evidence="1" type="primary">clpP1</name>
    <name type="ordered locus">DIP1791</name>
</gene>
<keyword id="KW-0963">Cytoplasm</keyword>
<keyword id="KW-0378">Hydrolase</keyword>
<keyword id="KW-0645">Protease</keyword>
<keyword id="KW-1185">Reference proteome</keyword>
<keyword id="KW-0720">Serine protease</keyword>
<dbReference type="EC" id="3.4.21.92" evidence="1"/>
<dbReference type="EMBL" id="BX248359">
    <property type="protein sequence ID" value="CAE50321.1"/>
    <property type="molecule type" value="Genomic_DNA"/>
</dbReference>
<dbReference type="RefSeq" id="WP_003852475.1">
    <property type="nucleotide sequence ID" value="NC_002935.2"/>
</dbReference>
<dbReference type="SMR" id="Q6NFU5"/>
<dbReference type="STRING" id="257309.DIP1791"/>
<dbReference type="MEROPS" id="S14.009"/>
<dbReference type="KEGG" id="cdi:DIP1791"/>
<dbReference type="HOGENOM" id="CLU_058707_3_2_11"/>
<dbReference type="Proteomes" id="UP000002198">
    <property type="component" value="Chromosome"/>
</dbReference>
<dbReference type="GO" id="GO:0005737">
    <property type="term" value="C:cytoplasm"/>
    <property type="evidence" value="ECO:0007669"/>
    <property type="project" value="UniProtKB-SubCell"/>
</dbReference>
<dbReference type="GO" id="GO:0009368">
    <property type="term" value="C:endopeptidase Clp complex"/>
    <property type="evidence" value="ECO:0007669"/>
    <property type="project" value="TreeGrafter"/>
</dbReference>
<dbReference type="GO" id="GO:0004176">
    <property type="term" value="F:ATP-dependent peptidase activity"/>
    <property type="evidence" value="ECO:0007669"/>
    <property type="project" value="InterPro"/>
</dbReference>
<dbReference type="GO" id="GO:0051117">
    <property type="term" value="F:ATPase binding"/>
    <property type="evidence" value="ECO:0007669"/>
    <property type="project" value="TreeGrafter"/>
</dbReference>
<dbReference type="GO" id="GO:0004252">
    <property type="term" value="F:serine-type endopeptidase activity"/>
    <property type="evidence" value="ECO:0007669"/>
    <property type="project" value="UniProtKB-UniRule"/>
</dbReference>
<dbReference type="GO" id="GO:0006515">
    <property type="term" value="P:protein quality control for misfolded or incompletely synthesized proteins"/>
    <property type="evidence" value="ECO:0007669"/>
    <property type="project" value="TreeGrafter"/>
</dbReference>
<dbReference type="CDD" id="cd07017">
    <property type="entry name" value="S14_ClpP_2"/>
    <property type="match status" value="1"/>
</dbReference>
<dbReference type="FunFam" id="3.90.226.10:FF:000002">
    <property type="entry name" value="ATP-dependent Clp protease proteolytic subunit"/>
    <property type="match status" value="1"/>
</dbReference>
<dbReference type="Gene3D" id="3.90.226.10">
    <property type="entry name" value="2-enoyl-CoA Hydratase, Chain A, domain 1"/>
    <property type="match status" value="1"/>
</dbReference>
<dbReference type="HAMAP" id="MF_00444">
    <property type="entry name" value="ClpP"/>
    <property type="match status" value="1"/>
</dbReference>
<dbReference type="InterPro" id="IPR001907">
    <property type="entry name" value="ClpP"/>
</dbReference>
<dbReference type="InterPro" id="IPR029045">
    <property type="entry name" value="ClpP/crotonase-like_dom_sf"/>
</dbReference>
<dbReference type="InterPro" id="IPR023562">
    <property type="entry name" value="ClpP/TepA"/>
</dbReference>
<dbReference type="InterPro" id="IPR033135">
    <property type="entry name" value="ClpP_His_AS"/>
</dbReference>
<dbReference type="InterPro" id="IPR018215">
    <property type="entry name" value="ClpP_Ser_AS"/>
</dbReference>
<dbReference type="NCBIfam" id="NF001368">
    <property type="entry name" value="PRK00277.1"/>
    <property type="match status" value="1"/>
</dbReference>
<dbReference type="NCBIfam" id="NF009205">
    <property type="entry name" value="PRK12553.1"/>
    <property type="match status" value="1"/>
</dbReference>
<dbReference type="PANTHER" id="PTHR10381">
    <property type="entry name" value="ATP-DEPENDENT CLP PROTEASE PROTEOLYTIC SUBUNIT"/>
    <property type="match status" value="1"/>
</dbReference>
<dbReference type="PANTHER" id="PTHR10381:SF26">
    <property type="entry name" value="ATP-DEPENDENT CLP PROTEASE PROTEOLYTIC SUBUNIT-LIKE-RELATED"/>
    <property type="match status" value="1"/>
</dbReference>
<dbReference type="Pfam" id="PF00574">
    <property type="entry name" value="CLP_protease"/>
    <property type="match status" value="1"/>
</dbReference>
<dbReference type="PRINTS" id="PR00127">
    <property type="entry name" value="CLPPROTEASEP"/>
</dbReference>
<dbReference type="SUPFAM" id="SSF52096">
    <property type="entry name" value="ClpP/crotonase"/>
    <property type="match status" value="1"/>
</dbReference>
<dbReference type="PROSITE" id="PS00382">
    <property type="entry name" value="CLP_PROTEASE_HIS"/>
    <property type="match status" value="1"/>
</dbReference>
<dbReference type="PROSITE" id="PS00381">
    <property type="entry name" value="CLP_PROTEASE_SER"/>
    <property type="match status" value="1"/>
</dbReference>
<comment type="function">
    <text evidence="1">Cleaves peptides in various proteins in a process that requires ATP hydrolysis. Has a chymotrypsin-like activity. Plays a major role in the degradation of misfolded proteins.</text>
</comment>
<comment type="catalytic activity">
    <reaction evidence="1">
        <text>Hydrolysis of proteins to small peptides in the presence of ATP and magnesium. alpha-casein is the usual test substrate. In the absence of ATP, only oligopeptides shorter than five residues are hydrolyzed (such as succinyl-Leu-Tyr-|-NHMec, and Leu-Tyr-Leu-|-Tyr-Trp, in which cleavage of the -Tyr-|-Leu- and -Tyr-|-Trp bonds also occurs).</text>
        <dbReference type="EC" id="3.4.21.92"/>
    </reaction>
</comment>
<comment type="subunit">
    <text evidence="1">Fourteen ClpP subunits assemble into 2 heptameric rings which stack back to back to give a disk-like structure with a central cavity, resembling the structure of eukaryotic proteasomes.</text>
</comment>
<comment type="subcellular location">
    <subcellularLocation>
        <location evidence="1">Cytoplasm</location>
    </subcellularLocation>
</comment>
<comment type="similarity">
    <text evidence="1">Belongs to the peptidase S14 family.</text>
</comment>
<proteinExistence type="inferred from homology"/>
<protein>
    <recommendedName>
        <fullName evidence="1">ATP-dependent Clp protease proteolytic subunit 1</fullName>
        <ecNumber evidence="1">3.4.21.92</ecNumber>
    </recommendedName>
    <alternativeName>
        <fullName evidence="1">Endopeptidase Clp 1</fullName>
    </alternativeName>
</protein>
<evidence type="ECO:0000255" key="1">
    <source>
        <dbReference type="HAMAP-Rule" id="MF_00444"/>
    </source>
</evidence>
<name>CLPP1_CORDI</name>
<organism>
    <name type="scientific">Corynebacterium diphtheriae (strain ATCC 700971 / NCTC 13129 / Biotype gravis)</name>
    <dbReference type="NCBI Taxonomy" id="257309"/>
    <lineage>
        <taxon>Bacteria</taxon>
        <taxon>Bacillati</taxon>
        <taxon>Actinomycetota</taxon>
        <taxon>Actinomycetes</taxon>
        <taxon>Mycobacteriales</taxon>
        <taxon>Corynebacteriaceae</taxon>
        <taxon>Corynebacterium</taxon>
    </lineage>
</organism>